<gene>
    <name type="primary">Tex47</name>
</gene>
<accession>Q9D5W8</accession>
<keyword id="KW-1185">Reference proteome</keyword>
<reference key="1">
    <citation type="journal article" date="2005" name="Science">
        <title>The transcriptional landscape of the mammalian genome.</title>
        <authorList>
            <person name="Carninci P."/>
            <person name="Kasukawa T."/>
            <person name="Katayama S."/>
            <person name="Gough J."/>
            <person name="Frith M.C."/>
            <person name="Maeda N."/>
            <person name="Oyama R."/>
            <person name="Ravasi T."/>
            <person name="Lenhard B."/>
            <person name="Wells C."/>
            <person name="Kodzius R."/>
            <person name="Shimokawa K."/>
            <person name="Bajic V.B."/>
            <person name="Brenner S.E."/>
            <person name="Batalov S."/>
            <person name="Forrest A.R."/>
            <person name="Zavolan M."/>
            <person name="Davis M.J."/>
            <person name="Wilming L.G."/>
            <person name="Aidinis V."/>
            <person name="Allen J.E."/>
            <person name="Ambesi-Impiombato A."/>
            <person name="Apweiler R."/>
            <person name="Aturaliya R.N."/>
            <person name="Bailey T.L."/>
            <person name="Bansal M."/>
            <person name="Baxter L."/>
            <person name="Beisel K.W."/>
            <person name="Bersano T."/>
            <person name="Bono H."/>
            <person name="Chalk A.M."/>
            <person name="Chiu K.P."/>
            <person name="Choudhary V."/>
            <person name="Christoffels A."/>
            <person name="Clutterbuck D.R."/>
            <person name="Crowe M.L."/>
            <person name="Dalla E."/>
            <person name="Dalrymple B.P."/>
            <person name="de Bono B."/>
            <person name="Della Gatta G."/>
            <person name="di Bernardo D."/>
            <person name="Down T."/>
            <person name="Engstrom P."/>
            <person name="Fagiolini M."/>
            <person name="Faulkner G."/>
            <person name="Fletcher C.F."/>
            <person name="Fukushima T."/>
            <person name="Furuno M."/>
            <person name="Futaki S."/>
            <person name="Gariboldi M."/>
            <person name="Georgii-Hemming P."/>
            <person name="Gingeras T.R."/>
            <person name="Gojobori T."/>
            <person name="Green R.E."/>
            <person name="Gustincich S."/>
            <person name="Harbers M."/>
            <person name="Hayashi Y."/>
            <person name="Hensch T.K."/>
            <person name="Hirokawa N."/>
            <person name="Hill D."/>
            <person name="Huminiecki L."/>
            <person name="Iacono M."/>
            <person name="Ikeo K."/>
            <person name="Iwama A."/>
            <person name="Ishikawa T."/>
            <person name="Jakt M."/>
            <person name="Kanapin A."/>
            <person name="Katoh M."/>
            <person name="Kawasawa Y."/>
            <person name="Kelso J."/>
            <person name="Kitamura H."/>
            <person name="Kitano H."/>
            <person name="Kollias G."/>
            <person name="Krishnan S.P."/>
            <person name="Kruger A."/>
            <person name="Kummerfeld S.K."/>
            <person name="Kurochkin I.V."/>
            <person name="Lareau L.F."/>
            <person name="Lazarevic D."/>
            <person name="Lipovich L."/>
            <person name="Liu J."/>
            <person name="Liuni S."/>
            <person name="McWilliam S."/>
            <person name="Madan Babu M."/>
            <person name="Madera M."/>
            <person name="Marchionni L."/>
            <person name="Matsuda H."/>
            <person name="Matsuzawa S."/>
            <person name="Miki H."/>
            <person name="Mignone F."/>
            <person name="Miyake S."/>
            <person name="Morris K."/>
            <person name="Mottagui-Tabar S."/>
            <person name="Mulder N."/>
            <person name="Nakano N."/>
            <person name="Nakauchi H."/>
            <person name="Ng P."/>
            <person name="Nilsson R."/>
            <person name="Nishiguchi S."/>
            <person name="Nishikawa S."/>
            <person name="Nori F."/>
            <person name="Ohara O."/>
            <person name="Okazaki Y."/>
            <person name="Orlando V."/>
            <person name="Pang K.C."/>
            <person name="Pavan W.J."/>
            <person name="Pavesi G."/>
            <person name="Pesole G."/>
            <person name="Petrovsky N."/>
            <person name="Piazza S."/>
            <person name="Reed J."/>
            <person name="Reid J.F."/>
            <person name="Ring B.Z."/>
            <person name="Ringwald M."/>
            <person name="Rost B."/>
            <person name="Ruan Y."/>
            <person name="Salzberg S.L."/>
            <person name="Sandelin A."/>
            <person name="Schneider C."/>
            <person name="Schoenbach C."/>
            <person name="Sekiguchi K."/>
            <person name="Semple C.A."/>
            <person name="Seno S."/>
            <person name="Sessa L."/>
            <person name="Sheng Y."/>
            <person name="Shibata Y."/>
            <person name="Shimada H."/>
            <person name="Shimada K."/>
            <person name="Silva D."/>
            <person name="Sinclair B."/>
            <person name="Sperling S."/>
            <person name="Stupka E."/>
            <person name="Sugiura K."/>
            <person name="Sultana R."/>
            <person name="Takenaka Y."/>
            <person name="Taki K."/>
            <person name="Tammoja K."/>
            <person name="Tan S.L."/>
            <person name="Tang S."/>
            <person name="Taylor M.S."/>
            <person name="Tegner J."/>
            <person name="Teichmann S.A."/>
            <person name="Ueda H.R."/>
            <person name="van Nimwegen E."/>
            <person name="Verardo R."/>
            <person name="Wei C.L."/>
            <person name="Yagi K."/>
            <person name="Yamanishi H."/>
            <person name="Zabarovsky E."/>
            <person name="Zhu S."/>
            <person name="Zimmer A."/>
            <person name="Hide W."/>
            <person name="Bult C."/>
            <person name="Grimmond S.M."/>
            <person name="Teasdale R.D."/>
            <person name="Liu E.T."/>
            <person name="Brusic V."/>
            <person name="Quackenbush J."/>
            <person name="Wahlestedt C."/>
            <person name="Mattick J.S."/>
            <person name="Hume D.A."/>
            <person name="Kai C."/>
            <person name="Sasaki D."/>
            <person name="Tomaru Y."/>
            <person name="Fukuda S."/>
            <person name="Kanamori-Katayama M."/>
            <person name="Suzuki M."/>
            <person name="Aoki J."/>
            <person name="Arakawa T."/>
            <person name="Iida J."/>
            <person name="Imamura K."/>
            <person name="Itoh M."/>
            <person name="Kato T."/>
            <person name="Kawaji H."/>
            <person name="Kawagashira N."/>
            <person name="Kawashima T."/>
            <person name="Kojima M."/>
            <person name="Kondo S."/>
            <person name="Konno H."/>
            <person name="Nakano K."/>
            <person name="Ninomiya N."/>
            <person name="Nishio T."/>
            <person name="Okada M."/>
            <person name="Plessy C."/>
            <person name="Shibata K."/>
            <person name="Shiraki T."/>
            <person name="Suzuki S."/>
            <person name="Tagami M."/>
            <person name="Waki K."/>
            <person name="Watahiki A."/>
            <person name="Okamura-Oho Y."/>
            <person name="Suzuki H."/>
            <person name="Kawai J."/>
            <person name="Hayashizaki Y."/>
        </authorList>
    </citation>
    <scope>NUCLEOTIDE SEQUENCE [LARGE SCALE MRNA]</scope>
    <source>
        <strain>C57BL/6J</strain>
        <tissue>Testis</tissue>
    </source>
</reference>
<reference key="2">
    <citation type="journal article" date="2004" name="Genome Res.">
        <title>The status, quality, and expansion of the NIH full-length cDNA project: the Mammalian Gene Collection (MGC).</title>
        <authorList>
            <consortium name="The MGC Project Team"/>
        </authorList>
    </citation>
    <scope>NUCLEOTIDE SEQUENCE [LARGE SCALE MRNA]</scope>
    <source>
        <tissue>Testis</tissue>
    </source>
</reference>
<protein>
    <recommendedName>
        <fullName>Testis-expressed protein 47</fullName>
    </recommendedName>
</protein>
<feature type="chain" id="PRO_0000321828" description="Testis-expressed protein 47">
    <location>
        <begin position="1"/>
        <end position="253"/>
    </location>
</feature>
<organism>
    <name type="scientific">Mus musculus</name>
    <name type="common">Mouse</name>
    <dbReference type="NCBI Taxonomy" id="10090"/>
    <lineage>
        <taxon>Eukaryota</taxon>
        <taxon>Metazoa</taxon>
        <taxon>Chordata</taxon>
        <taxon>Craniata</taxon>
        <taxon>Vertebrata</taxon>
        <taxon>Euteleostomi</taxon>
        <taxon>Mammalia</taxon>
        <taxon>Eutheria</taxon>
        <taxon>Euarchontoglires</taxon>
        <taxon>Glires</taxon>
        <taxon>Rodentia</taxon>
        <taxon>Myomorpha</taxon>
        <taxon>Muroidea</taxon>
        <taxon>Muridae</taxon>
        <taxon>Murinae</taxon>
        <taxon>Mus</taxon>
        <taxon>Mus</taxon>
    </lineage>
</organism>
<proteinExistence type="evidence at transcript level"/>
<sequence>MSFMVHNRKGSKKQFQVDPLLLPKVPRTNYLHLQEEKHRLQLKKFLLHRMFLVGYIQGNTEKKDISEYYEQLFQSILKHHLGESVTGLMLIYPSTFLHILESSNGTLFRILLDYVAHEKSETEFMLQNMKIVVASHNIPTRLFMQWHISAIKVPVLYLDDESQSPSIEEVTTEFLTMTHKLALQLYKTVKLGAKGPGDNLHQLAPELILPEQIIKYLCKAEEFMDPASFLSMYNRPIHVTLDSDIVWPAPSRF</sequence>
<dbReference type="EMBL" id="AK014870">
    <property type="protein sequence ID" value="BAB29593.1"/>
    <property type="molecule type" value="mRNA"/>
</dbReference>
<dbReference type="EMBL" id="AK076678">
    <property type="protein sequence ID" value="BAC36441.1"/>
    <property type="molecule type" value="mRNA"/>
</dbReference>
<dbReference type="EMBL" id="AK133311">
    <property type="protein sequence ID" value="BAE21604.1"/>
    <property type="molecule type" value="mRNA"/>
</dbReference>
<dbReference type="EMBL" id="BC049718">
    <property type="protein sequence ID" value="AAH49718.1"/>
    <property type="molecule type" value="mRNA"/>
</dbReference>
<dbReference type="CCDS" id="CCDS19078.1"/>
<dbReference type="RefSeq" id="NP_081879.1">
    <property type="nucleotide sequence ID" value="NM_027603.2"/>
</dbReference>
<dbReference type="RefSeq" id="XP_006503667.1">
    <property type="nucleotide sequence ID" value="XM_006503604.4"/>
</dbReference>
<dbReference type="SMR" id="Q9D5W8"/>
<dbReference type="STRING" id="10090.ENSMUSP00000125471"/>
<dbReference type="PhosphoSitePlus" id="Q9D5W8"/>
<dbReference type="PaxDb" id="10090-ENSMUSP00000125471"/>
<dbReference type="PeptideAtlas" id="Q9D5W8"/>
<dbReference type="ProteomicsDB" id="263110"/>
<dbReference type="Antibodypedia" id="15398">
    <property type="antibodies" value="52 antibodies from 15 providers"/>
</dbReference>
<dbReference type="DNASU" id="70920"/>
<dbReference type="Ensembl" id="ENSMUST00000088796.3">
    <property type="protein sequence ID" value="ENSMUSP00000086176.3"/>
    <property type="gene ID" value="ENSMUSG00000040514.7"/>
</dbReference>
<dbReference type="Ensembl" id="ENSMUST00000159546.2">
    <property type="protein sequence ID" value="ENSMUSP00000124368.2"/>
    <property type="gene ID" value="ENSMUSG00000040514.7"/>
</dbReference>
<dbReference type="Ensembl" id="ENSMUST00000160634.2">
    <property type="protein sequence ID" value="ENSMUSP00000125471.2"/>
    <property type="gene ID" value="ENSMUSG00000040514.7"/>
</dbReference>
<dbReference type="GeneID" id="70920"/>
<dbReference type="KEGG" id="mmu:70920"/>
<dbReference type="UCSC" id="uc008wjf.1">
    <property type="organism name" value="mouse"/>
</dbReference>
<dbReference type="AGR" id="MGI:1918170"/>
<dbReference type="CTD" id="219557"/>
<dbReference type="MGI" id="MGI:1918170">
    <property type="gene designation" value="Tex47"/>
</dbReference>
<dbReference type="VEuPathDB" id="HostDB:ENSMUSG00000040514"/>
<dbReference type="eggNOG" id="ENOG502RYKR">
    <property type="taxonomic scope" value="Eukaryota"/>
</dbReference>
<dbReference type="GeneTree" id="ENSGT00390000005565"/>
<dbReference type="HOGENOM" id="CLU_089495_0_0_1"/>
<dbReference type="InParanoid" id="Q9D5W8"/>
<dbReference type="OMA" id="RLFMQWY"/>
<dbReference type="OrthoDB" id="548795at2759"/>
<dbReference type="PhylomeDB" id="Q9D5W8"/>
<dbReference type="TreeFam" id="TF329731"/>
<dbReference type="BioGRID-ORCS" id="70920">
    <property type="hits" value="1 hit in 77 CRISPR screens"/>
</dbReference>
<dbReference type="PRO" id="PR:Q9D5W8"/>
<dbReference type="Proteomes" id="UP000000589">
    <property type="component" value="Chromosome 5"/>
</dbReference>
<dbReference type="RNAct" id="Q9D5W8">
    <property type="molecule type" value="protein"/>
</dbReference>
<dbReference type="Bgee" id="ENSMUSG00000040514">
    <property type="expression patterns" value="Expressed in seminiferous tubule of testis and 11 other cell types or tissues"/>
</dbReference>
<dbReference type="InterPro" id="IPR055308">
    <property type="entry name" value="TEX47-like"/>
</dbReference>
<dbReference type="PANTHER" id="PTHR34035">
    <property type="entry name" value="TESTIS-EXPRESSED PROTEIN 47"/>
    <property type="match status" value="1"/>
</dbReference>
<dbReference type="PANTHER" id="PTHR34035:SF1">
    <property type="entry name" value="TESTIS-EXPRESSED PROTEIN 47"/>
    <property type="match status" value="1"/>
</dbReference>
<dbReference type="Pfam" id="PF24787">
    <property type="entry name" value="TEX47"/>
    <property type="match status" value="1"/>
</dbReference>
<name>TEX47_MOUSE</name>